<proteinExistence type="evidence at protein level"/>
<sequence length="741" mass="85060">MAASVPEPRLLLLLLLLLPPLPPVTSASDRPRGANPVNPDKLLVITVATAETEGYRRFLQSAEFFNYTVRTLGLGQEWRGGDVARTVGGGQKVRWLKKEMEKYASQEDMIIMFVDSYDVILASSPTELLKKFVQSGSHLLFSAESFCWPDWGLAEQYPEVGVGKRFLNSGGFIGFAPTIHRIVRQWKYKDDDDDQLFYTQLYLDPGLREKLKLSLDHKSRIFQNLNGALDEVVLKFDQNRVRIRNVAYDTLPVVVHGNGPTKLQLNYLGNYVPNGWTPQGGCGFCNLNRRTLPGGQPPPRVLLAVFVEQPTPFLPRFLQRLLLLDYPPDRISLFLHNNEVYHEPHIADAWPQLQDHFSAVKLVGPEEALSSGEARDMAMDSCRQNPECEFYFSLDADAVLTNPETLRILIEQNRKVIAPMLSRHGKLWSNFWGALSPDEYYARSEDYVELVQRKRVGLWNVPYISQAYVIRGETLRTELPEKEVFSSSDTDPDMAFCRSVRDKGIFLHLSNQHEFGRLLSTSHYDTDHLHPDLWQIFDNPVDWREQYIHENYSRALDGEGLVEQPCPDVYWFPLLTEQMCDELVEEMEHYGQWSGGRHEDSRLAGGYENVPTVDIHMKQVGYEDQWLQLLRTYVGPMTEHLFPGYHTKTRAVMNFVVRYRPDEQPSLRPHHDSSTFTLNVALNHKGVDYEGGGCRFLRYDCRVSSPRKGWALLHPGRLTHYHEGLPTTRGTRYIMVSFVDP</sequence>
<gene>
    <name type="primary">Plod3</name>
</gene>
<organism>
    <name type="scientific">Rattus norvegicus</name>
    <name type="common">Rat</name>
    <dbReference type="NCBI Taxonomy" id="10116"/>
    <lineage>
        <taxon>Eukaryota</taxon>
        <taxon>Metazoa</taxon>
        <taxon>Chordata</taxon>
        <taxon>Craniata</taxon>
        <taxon>Vertebrata</taxon>
        <taxon>Euteleostomi</taxon>
        <taxon>Mammalia</taxon>
        <taxon>Eutheria</taxon>
        <taxon>Euarchontoglires</taxon>
        <taxon>Glires</taxon>
        <taxon>Rodentia</taxon>
        <taxon>Myomorpha</taxon>
        <taxon>Muroidea</taxon>
        <taxon>Muridae</taxon>
        <taxon>Murinae</taxon>
        <taxon>Rattus</taxon>
    </lineage>
</organism>
<accession>Q5U367</accession>
<accession>Q811A5</accession>
<protein>
    <recommendedName>
        <fullName>Multifunctional procollagen lysine hydroxylase and glycosyltransferase LH3</fullName>
    </recommendedName>
    <domain>
        <recommendedName>
            <fullName>Procollagen-lysine,2-oxoglutarate 5-dioxygenase 3</fullName>
            <ecNumber evidence="5">1.14.11.4</ecNumber>
        </recommendedName>
        <alternativeName>
            <fullName>Lysyl hydroxylase 3</fullName>
            <shortName>LH3</shortName>
        </alternativeName>
    </domain>
    <domain>
        <recommendedName>
            <fullName>Procollagen glycosyltransferase</fullName>
            <ecNumber evidence="1">2.4.1.50</ecNumber>
            <ecNumber evidence="1">2.4.1.66</ecNumber>
        </recommendedName>
        <alternativeName>
            <fullName>Galactosylhydroxylysine-glucosyltransferase</fullName>
        </alternativeName>
        <alternativeName>
            <fullName>Procollagen galactosyltransferase</fullName>
        </alternativeName>
        <alternativeName>
            <fullName>Procollagen glucosyltransferase</fullName>
        </alternativeName>
    </domain>
</protein>
<dbReference type="EC" id="1.14.11.4" evidence="5"/>
<dbReference type="EC" id="2.4.1.50" evidence="1"/>
<dbReference type="EC" id="2.4.1.66" evidence="1"/>
<dbReference type="EMBL" id="AJ430859">
    <property type="protein sequence ID" value="CAD23628.1"/>
    <property type="molecule type" value="mRNA"/>
</dbReference>
<dbReference type="EMBL" id="BC085683">
    <property type="protein sequence ID" value="AAH85683.1"/>
    <property type="molecule type" value="mRNA"/>
</dbReference>
<dbReference type="RefSeq" id="NP_835202.2">
    <property type="nucleotide sequence ID" value="NM_178101.3"/>
</dbReference>
<dbReference type="SMR" id="Q5U367"/>
<dbReference type="FunCoup" id="Q5U367">
    <property type="interactions" value="1417"/>
</dbReference>
<dbReference type="IntAct" id="Q5U367">
    <property type="interactions" value="9"/>
</dbReference>
<dbReference type="STRING" id="10116.ENSRNOP00000001921"/>
<dbReference type="GlyCosmos" id="Q5U367">
    <property type="glycosylation" value="2 sites, No reported glycans"/>
</dbReference>
<dbReference type="GlyGen" id="Q5U367">
    <property type="glycosylation" value="2 sites"/>
</dbReference>
<dbReference type="PhosphoSitePlus" id="Q5U367"/>
<dbReference type="jPOST" id="Q5U367"/>
<dbReference type="PaxDb" id="10116-ENSRNOP00000001921"/>
<dbReference type="Ensembl" id="ENSRNOT00000001921.5">
    <property type="protein sequence ID" value="ENSRNOP00000001921.3"/>
    <property type="gene ID" value="ENSRNOG00000001417.6"/>
</dbReference>
<dbReference type="GeneID" id="288583"/>
<dbReference type="KEGG" id="rno:288583"/>
<dbReference type="UCSC" id="RGD:631339">
    <property type="organism name" value="rat"/>
</dbReference>
<dbReference type="AGR" id="RGD:631339"/>
<dbReference type="CTD" id="8985"/>
<dbReference type="RGD" id="631339">
    <property type="gene designation" value="Plod3"/>
</dbReference>
<dbReference type="eggNOG" id="KOG1971">
    <property type="taxonomic scope" value="Eukaryota"/>
</dbReference>
<dbReference type="GeneTree" id="ENSGT01030000234558"/>
<dbReference type="HOGENOM" id="CLU_022320_1_0_1"/>
<dbReference type="InParanoid" id="Q5U367"/>
<dbReference type="OrthoDB" id="12860at9989"/>
<dbReference type="PhylomeDB" id="Q5U367"/>
<dbReference type="TreeFam" id="TF313826"/>
<dbReference type="BRENDA" id="1.14.11.4">
    <property type="organism ID" value="5301"/>
</dbReference>
<dbReference type="Reactome" id="R-RNO-1650814">
    <property type="pathway name" value="Collagen biosynthesis and modifying enzymes"/>
</dbReference>
<dbReference type="PRO" id="PR:Q5U367"/>
<dbReference type="Proteomes" id="UP000002494">
    <property type="component" value="Chromosome 12"/>
</dbReference>
<dbReference type="Bgee" id="ENSRNOG00000001417">
    <property type="expression patterns" value="Expressed in ovary and 20 other cell types or tissues"/>
</dbReference>
<dbReference type="GO" id="GO:0062023">
    <property type="term" value="C:collagen-containing extracellular matrix"/>
    <property type="evidence" value="ECO:0000318"/>
    <property type="project" value="GO_Central"/>
</dbReference>
<dbReference type="GO" id="GO:0005783">
    <property type="term" value="C:endoplasmic reticulum"/>
    <property type="evidence" value="ECO:0000250"/>
    <property type="project" value="UniProtKB"/>
</dbReference>
<dbReference type="GO" id="GO:0005788">
    <property type="term" value="C:endoplasmic reticulum lumen"/>
    <property type="evidence" value="ECO:0007669"/>
    <property type="project" value="UniProtKB-SubCell"/>
</dbReference>
<dbReference type="GO" id="GO:0005789">
    <property type="term" value="C:endoplasmic reticulum membrane"/>
    <property type="evidence" value="ECO:0007669"/>
    <property type="project" value="UniProtKB-SubCell"/>
</dbReference>
<dbReference type="GO" id="GO:0005615">
    <property type="term" value="C:extracellular space"/>
    <property type="evidence" value="ECO:0000250"/>
    <property type="project" value="UniProtKB"/>
</dbReference>
<dbReference type="GO" id="GO:0005794">
    <property type="term" value="C:Golgi apparatus"/>
    <property type="evidence" value="ECO:0000266"/>
    <property type="project" value="RGD"/>
</dbReference>
<dbReference type="GO" id="GO:0005791">
    <property type="term" value="C:rough endoplasmic reticulum"/>
    <property type="evidence" value="ECO:0007669"/>
    <property type="project" value="UniProtKB-SubCell"/>
</dbReference>
<dbReference type="GO" id="GO:0005802">
    <property type="term" value="C:trans-Golgi network"/>
    <property type="evidence" value="ECO:0000266"/>
    <property type="project" value="RGD"/>
</dbReference>
<dbReference type="GO" id="GO:0005506">
    <property type="term" value="F:iron ion binding"/>
    <property type="evidence" value="ECO:0000266"/>
    <property type="project" value="RGD"/>
</dbReference>
<dbReference type="GO" id="GO:0031418">
    <property type="term" value="F:L-ascorbic acid binding"/>
    <property type="evidence" value="ECO:0007669"/>
    <property type="project" value="UniProtKB-KW"/>
</dbReference>
<dbReference type="GO" id="GO:0046872">
    <property type="term" value="F:metal ion binding"/>
    <property type="evidence" value="ECO:0000266"/>
    <property type="project" value="RGD"/>
</dbReference>
<dbReference type="GO" id="GO:0050211">
    <property type="term" value="F:procollagen galactosyltransferase activity"/>
    <property type="evidence" value="ECO:0000250"/>
    <property type="project" value="UniProtKB"/>
</dbReference>
<dbReference type="GO" id="GO:0033823">
    <property type="term" value="F:procollagen glucosyltransferase activity"/>
    <property type="evidence" value="ECO:0000250"/>
    <property type="project" value="UniProtKB"/>
</dbReference>
<dbReference type="GO" id="GO:0008475">
    <property type="term" value="F:procollagen-lysine 5-dioxygenase activity"/>
    <property type="evidence" value="ECO:0000250"/>
    <property type="project" value="UniProtKB"/>
</dbReference>
<dbReference type="GO" id="GO:0036094">
    <property type="term" value="F:small molecule binding"/>
    <property type="evidence" value="ECO:0000266"/>
    <property type="project" value="RGD"/>
</dbReference>
<dbReference type="GO" id="GO:0070831">
    <property type="term" value="P:basement membrane assembly"/>
    <property type="evidence" value="ECO:0000266"/>
    <property type="project" value="RGD"/>
</dbReference>
<dbReference type="GO" id="GO:0032870">
    <property type="term" value="P:cellular response to hormone stimulus"/>
    <property type="evidence" value="ECO:0000270"/>
    <property type="project" value="RGD"/>
</dbReference>
<dbReference type="GO" id="GO:0030199">
    <property type="term" value="P:collagen fibril organization"/>
    <property type="evidence" value="ECO:0000266"/>
    <property type="project" value="RGD"/>
</dbReference>
<dbReference type="GO" id="GO:0032963">
    <property type="term" value="P:collagen metabolic process"/>
    <property type="evidence" value="ECO:0000266"/>
    <property type="project" value="RGD"/>
</dbReference>
<dbReference type="GO" id="GO:0001886">
    <property type="term" value="P:endothelial cell morphogenesis"/>
    <property type="evidence" value="ECO:0000266"/>
    <property type="project" value="RGD"/>
</dbReference>
<dbReference type="GO" id="GO:0048730">
    <property type="term" value="P:epidermis morphogenesis"/>
    <property type="evidence" value="ECO:0000266"/>
    <property type="project" value="RGD"/>
</dbReference>
<dbReference type="GO" id="GO:0046947">
    <property type="term" value="P:hydroxylysine biosynthetic process"/>
    <property type="evidence" value="ECO:0000266"/>
    <property type="project" value="RGD"/>
</dbReference>
<dbReference type="GO" id="GO:0001701">
    <property type="term" value="P:in utero embryonic development"/>
    <property type="evidence" value="ECO:0000266"/>
    <property type="project" value="RGD"/>
</dbReference>
<dbReference type="GO" id="GO:0060425">
    <property type="term" value="P:lung morphogenesis"/>
    <property type="evidence" value="ECO:0000266"/>
    <property type="project" value="RGD"/>
</dbReference>
<dbReference type="GO" id="GO:0021915">
    <property type="term" value="P:neural tube development"/>
    <property type="evidence" value="ECO:0000266"/>
    <property type="project" value="RGD"/>
</dbReference>
<dbReference type="GO" id="GO:0017185">
    <property type="term" value="P:peptidyl-lysine hydroxylation"/>
    <property type="evidence" value="ECO:0000250"/>
    <property type="project" value="UniProtKB"/>
</dbReference>
<dbReference type="GO" id="GO:0008104">
    <property type="term" value="P:protein localization"/>
    <property type="evidence" value="ECO:0000266"/>
    <property type="project" value="RGD"/>
</dbReference>
<dbReference type="GO" id="GO:0006493">
    <property type="term" value="P:protein O-linked glycosylation"/>
    <property type="evidence" value="ECO:0000266"/>
    <property type="project" value="RGD"/>
</dbReference>
<dbReference type="GO" id="GO:0042311">
    <property type="term" value="P:vasodilation"/>
    <property type="evidence" value="ECO:0000266"/>
    <property type="project" value="RGD"/>
</dbReference>
<dbReference type="CDD" id="cd23002">
    <property type="entry name" value="GT_LH3"/>
    <property type="match status" value="1"/>
</dbReference>
<dbReference type="FunFam" id="2.60.120.620:FF:000004">
    <property type="entry name" value="Procollagen-lysine,2-oxoglutarate 5-dioxygenase 2"/>
    <property type="match status" value="1"/>
</dbReference>
<dbReference type="Gene3D" id="2.60.120.620">
    <property type="entry name" value="q2cbj1_9rhob like domain"/>
    <property type="match status" value="1"/>
</dbReference>
<dbReference type="InterPro" id="IPR050757">
    <property type="entry name" value="Collagen_mod_GT25"/>
</dbReference>
<dbReference type="InterPro" id="IPR044861">
    <property type="entry name" value="IPNS-like_FE2OG_OXY"/>
</dbReference>
<dbReference type="InterPro" id="IPR029044">
    <property type="entry name" value="Nucleotide-diphossugar_trans"/>
</dbReference>
<dbReference type="InterPro" id="IPR005123">
    <property type="entry name" value="Oxoglu/Fe-dep_dioxygenase_dom"/>
</dbReference>
<dbReference type="InterPro" id="IPR006620">
    <property type="entry name" value="Pro_4_hyd_alph"/>
</dbReference>
<dbReference type="InterPro" id="IPR001006">
    <property type="entry name" value="Procol_lys_dOase"/>
</dbReference>
<dbReference type="PANTHER" id="PTHR10730:SF7">
    <property type="entry name" value="MULTIFUNCTIONAL PROCOLLAGEN LYSINE HYDROXYLASE AND GLYCOSYLTRANSFERASE LH3"/>
    <property type="match status" value="1"/>
</dbReference>
<dbReference type="PANTHER" id="PTHR10730">
    <property type="entry name" value="PROCOLLAGEN-LYSINE,2-OXOGLUTARATE 5-DIOXYGENASE/GLYCOSYLTRANSFERASE 25 FAMILY MEMBER"/>
    <property type="match status" value="1"/>
</dbReference>
<dbReference type="Pfam" id="PF03171">
    <property type="entry name" value="2OG-FeII_Oxy"/>
    <property type="match status" value="1"/>
</dbReference>
<dbReference type="Pfam" id="PF25342">
    <property type="entry name" value="GT_PLOD"/>
    <property type="match status" value="1"/>
</dbReference>
<dbReference type="Pfam" id="PF25238">
    <property type="entry name" value="OGFOD2-like"/>
    <property type="match status" value="1"/>
</dbReference>
<dbReference type="SMART" id="SM00702">
    <property type="entry name" value="P4Hc"/>
    <property type="match status" value="1"/>
</dbReference>
<dbReference type="SUPFAM" id="SSF53448">
    <property type="entry name" value="Nucleotide-diphospho-sugar transferases"/>
    <property type="match status" value="1"/>
</dbReference>
<dbReference type="PROSITE" id="PS51471">
    <property type="entry name" value="FE2OG_OXY"/>
    <property type="match status" value="1"/>
</dbReference>
<dbReference type="PROSITE" id="PS01325">
    <property type="entry name" value="LYS_HYDROXYLASE"/>
    <property type="match status" value="1"/>
</dbReference>
<name>PLOD3_RAT</name>
<reference key="1">
    <citation type="journal article" date="2003" name="Biochem. Biophys. Res. Commun.">
        <title>Identification, expression, and tissue distribution of the three rat lysyl hydroxylase isoforms.</title>
        <authorList>
            <person name="Mercer D.K."/>
            <person name="Nicol P.F."/>
            <person name="Wright M.C."/>
            <person name="Robins S.P."/>
        </authorList>
    </citation>
    <scope>NUCLEOTIDE SEQUENCE [MRNA]</scope>
    <scope>CATALYTIC ACTIVITY</scope>
    <scope>TISSUE SPECIFICITY</scope>
    <source>
        <strain>Sprague-Dawley</strain>
        <tissue>Liver</tissue>
    </source>
</reference>
<reference key="2">
    <citation type="journal article" date="2004" name="Genome Res.">
        <title>The status, quality, and expansion of the NIH full-length cDNA project: the Mammalian Gene Collection (MGC).</title>
        <authorList>
            <consortium name="The MGC Project Team"/>
        </authorList>
    </citation>
    <scope>NUCLEOTIDE SEQUENCE [LARGE SCALE MRNA]</scope>
    <source>
        <tissue>Kidney</tissue>
    </source>
</reference>
<keyword id="KW-0223">Dioxygenase</keyword>
<keyword id="KW-1015">Disulfide bond</keyword>
<keyword id="KW-0256">Endoplasmic reticulum</keyword>
<keyword id="KW-0325">Glycoprotein</keyword>
<keyword id="KW-0328">Glycosyltransferase</keyword>
<keyword id="KW-0408">Iron</keyword>
<keyword id="KW-0464">Manganese</keyword>
<keyword id="KW-0472">Membrane</keyword>
<keyword id="KW-0479">Metal-binding</keyword>
<keyword id="KW-0511">Multifunctional enzyme</keyword>
<keyword id="KW-0560">Oxidoreductase</keyword>
<keyword id="KW-1185">Reference proteome</keyword>
<keyword id="KW-0964">Secreted</keyword>
<keyword id="KW-0732">Signal</keyword>
<keyword id="KW-0808">Transferase</keyword>
<keyword id="KW-0847">Vitamin C</keyword>
<feature type="signal peptide" evidence="3">
    <location>
        <begin position="1"/>
        <end position="27"/>
    </location>
</feature>
<feature type="chain" id="PRO_0000041774" description="Multifunctional procollagen lysine hydroxylase and glycosyltransferase LH3">
    <location>
        <begin position="28"/>
        <end position="741"/>
    </location>
</feature>
<feature type="domain" description="Fe2OG dioxygenase" evidence="4">
    <location>
        <begin position="650"/>
        <end position="741"/>
    </location>
</feature>
<feature type="region of interest" description="Required for glycosyltransferase activity" evidence="1">
    <location>
        <begin position="28"/>
        <end position="293"/>
    </location>
</feature>
<feature type="region of interest" description="Accessory region" evidence="1">
    <location>
        <begin position="298"/>
        <end position="523"/>
    </location>
</feature>
<feature type="region of interest" description="Important for dimerization" evidence="1">
    <location>
        <begin position="675"/>
        <end position="718"/>
    </location>
</feature>
<feature type="binding site" evidence="1">
    <location>
        <begin position="47"/>
        <end position="49"/>
    </location>
    <ligand>
        <name>UDP</name>
        <dbReference type="ChEBI" id="CHEBI:58223"/>
    </ligand>
</feature>
<feature type="binding site" evidence="1">
    <location>
        <begin position="115"/>
        <end position="117"/>
    </location>
    <ligand>
        <name>UDP</name>
        <dbReference type="ChEBI" id="CHEBI:58223"/>
    </ligand>
</feature>
<feature type="binding site" evidence="1">
    <location>
        <position position="115"/>
    </location>
    <ligand>
        <name>Mn(2+)</name>
        <dbReference type="ChEBI" id="CHEBI:29035"/>
    </ligand>
</feature>
<feature type="binding site" evidence="1">
    <location>
        <position position="118"/>
    </location>
    <ligand>
        <name>Mn(2+)</name>
        <dbReference type="ChEBI" id="CHEBI:29035"/>
    </ligand>
</feature>
<feature type="binding site" evidence="1">
    <location>
        <position position="256"/>
    </location>
    <ligand>
        <name>Mn(2+)</name>
        <dbReference type="ChEBI" id="CHEBI:29035"/>
    </ligand>
</feature>
<feature type="binding site" evidence="1">
    <location>
        <begin position="259"/>
        <end position="262"/>
    </location>
    <ligand>
        <name>UDP</name>
        <dbReference type="ChEBI" id="CHEBI:58223"/>
    </ligand>
</feature>
<feature type="binding site" evidence="1">
    <location>
        <position position="602"/>
    </location>
    <ligand>
        <name>2-oxoglutarate</name>
        <dbReference type="ChEBI" id="CHEBI:16810"/>
    </ligand>
</feature>
<feature type="binding site" evidence="1">
    <location>
        <position position="659"/>
    </location>
    <ligand>
        <name>2-oxoglutarate</name>
        <dbReference type="ChEBI" id="CHEBI:16810"/>
    </ligand>
</feature>
<feature type="binding site" evidence="4">
    <location>
        <position position="670"/>
    </location>
    <ligand>
        <name>Fe cation</name>
        <dbReference type="ChEBI" id="CHEBI:24875"/>
    </ligand>
</feature>
<feature type="binding site" evidence="4">
    <location>
        <position position="672"/>
    </location>
    <ligand>
        <name>Fe cation</name>
        <dbReference type="ChEBI" id="CHEBI:24875"/>
    </ligand>
</feature>
<feature type="binding site" evidence="1">
    <location>
        <position position="679"/>
    </location>
    <ligand>
        <name>2-oxoglutarate</name>
        <dbReference type="ChEBI" id="CHEBI:16810"/>
    </ligand>
</feature>
<feature type="binding site" evidence="4">
    <location>
        <position position="722"/>
    </location>
    <ligand>
        <name>Fe cation</name>
        <dbReference type="ChEBI" id="CHEBI:24875"/>
    </ligand>
</feature>
<feature type="binding site" evidence="1">
    <location>
        <position position="732"/>
    </location>
    <ligand>
        <name>2-oxoglutarate</name>
        <dbReference type="ChEBI" id="CHEBI:16810"/>
    </ligand>
</feature>
<feature type="glycosylation site" description="N-linked (GlcNAc...) asparagine" evidence="3">
    <location>
        <position position="66"/>
    </location>
</feature>
<feature type="glycosylation site" description="N-linked (GlcNAc...) asparagine" evidence="3">
    <location>
        <position position="551"/>
    </location>
</feature>
<feature type="disulfide bond" evidence="1">
    <location>
        <begin position="282"/>
        <end position="285"/>
    </location>
</feature>
<feature type="disulfide bond" evidence="1">
    <location>
        <begin position="382"/>
        <end position="388"/>
    </location>
</feature>
<feature type="disulfide bond" evidence="1">
    <location>
        <begin position="566"/>
        <end position="701"/>
    </location>
</feature>
<feature type="sequence conflict" description="In Ref. 1; CAD23628." evidence="6" ref="1">
    <original>SVPEPRL</original>
    <variation>ISPGTPA</variation>
    <location>
        <begin position="4"/>
        <end position="10"/>
    </location>
</feature>
<comment type="function">
    <text evidence="1 2">Multifunctional enzyme that catalyzes a series of post-translational modifications on Lys residues in procollagen. Plays a redundant role in catalyzing the formation of hydroxylysine residues in -Xaa-Lys-Gly- sequences in collagens (By similarity). Plays a redundant role in catalyzing the transfer of galactose onto hydroxylysine groups, giving rise to galactosyl 5-hydroxylysine (By similarity). Has an essential role by catalyzing the subsequent transfer of glucose moieties, giving rise to 1,2-glucosylgalactosyl-5-hydroxylysine residues. Catalyzes hydroxylation and glycosylation of Lys residues in the MBL1 collagen-like domain, giving rise to hydroxylysine and 1,2-glucosylgalactosyl-5-hydroxylysine residues. Catalyzes hydroxylation and glycosylation of Lys residues in the ADIPOQ collagen-like domain, giving rise to hydroxylysine and 1,2-glucosylgalactosyl-5-hydroxylysine residues. Essential for normal biosynthesis and secretion of type IV collagens. Essential for normal formation of basement membranes (By similarity).</text>
</comment>
<comment type="catalytic activity">
    <reaction evidence="5">
        <text>L-lysyl-[collagen] + 2-oxoglutarate + O2 = (5R)-5-hydroxy-L-lysyl-[collagen] + succinate + CO2</text>
        <dbReference type="Rhea" id="RHEA:16569"/>
        <dbReference type="Rhea" id="RHEA-COMP:12751"/>
        <dbReference type="Rhea" id="RHEA-COMP:12752"/>
        <dbReference type="ChEBI" id="CHEBI:15379"/>
        <dbReference type="ChEBI" id="CHEBI:16526"/>
        <dbReference type="ChEBI" id="CHEBI:16810"/>
        <dbReference type="ChEBI" id="CHEBI:29969"/>
        <dbReference type="ChEBI" id="CHEBI:30031"/>
        <dbReference type="ChEBI" id="CHEBI:133442"/>
        <dbReference type="EC" id="1.14.11.4"/>
    </reaction>
</comment>
<comment type="catalytic activity">
    <reaction evidence="1">
        <text>(5R)-5-hydroxy-L-lysyl-[collagen] + UDP-alpha-D-galactose = (5R)-5-O-(beta-D-galactosyl)-5-hydroxy-L-lysyl-[collagen] + UDP + H(+)</text>
        <dbReference type="Rhea" id="RHEA:12637"/>
        <dbReference type="Rhea" id="RHEA-COMP:12752"/>
        <dbReference type="Rhea" id="RHEA-COMP:12753"/>
        <dbReference type="ChEBI" id="CHEBI:15378"/>
        <dbReference type="ChEBI" id="CHEBI:58223"/>
        <dbReference type="ChEBI" id="CHEBI:66914"/>
        <dbReference type="ChEBI" id="CHEBI:133442"/>
        <dbReference type="ChEBI" id="CHEBI:133443"/>
        <dbReference type="EC" id="2.4.1.50"/>
    </reaction>
</comment>
<comment type="catalytic activity">
    <reaction evidence="1">
        <text>(5R)-5-O-(beta-D-galactosyl)-5-hydroxy-L-lysyl-[collagen] + UDP-alpha-D-glucose = (5R)-5-O-[alpha-D-glucosyl-(1-&gt;2)-beta-D-galactosyl]-5-hydroxy-L-lysyl-[collagen] + UDP + H(+)</text>
        <dbReference type="Rhea" id="RHEA:12576"/>
        <dbReference type="Rhea" id="RHEA-COMP:12753"/>
        <dbReference type="Rhea" id="RHEA-COMP:12754"/>
        <dbReference type="ChEBI" id="CHEBI:15378"/>
        <dbReference type="ChEBI" id="CHEBI:58223"/>
        <dbReference type="ChEBI" id="CHEBI:58885"/>
        <dbReference type="ChEBI" id="CHEBI:133443"/>
        <dbReference type="ChEBI" id="CHEBI:133452"/>
        <dbReference type="EC" id="2.4.1.66"/>
    </reaction>
</comment>
<comment type="cofactor">
    <cofactor evidence="1">
        <name>Fe(2+)</name>
        <dbReference type="ChEBI" id="CHEBI:29033"/>
    </cofactor>
</comment>
<comment type="cofactor">
    <cofactor evidence="1">
        <name>L-ascorbate</name>
        <dbReference type="ChEBI" id="CHEBI:38290"/>
    </cofactor>
</comment>
<comment type="cofactor">
    <cofactor evidence="1">
        <name>Mn(2+)</name>
        <dbReference type="ChEBI" id="CHEBI:29035"/>
    </cofactor>
</comment>
<comment type="subunit">
    <text evidence="1">Homodimer.</text>
</comment>
<comment type="subcellular location">
    <subcellularLocation>
        <location evidence="1">Rough endoplasmic reticulum</location>
    </subcellularLocation>
    <subcellularLocation>
        <location evidence="1">Endoplasmic reticulum lumen</location>
    </subcellularLocation>
    <subcellularLocation>
        <location evidence="2">Endoplasmic reticulum membrane</location>
        <topology evidence="2">Peripheral membrane protein</topology>
        <orientation evidence="2">Lumenal side</orientation>
    </subcellularLocation>
    <subcellularLocation>
        <location evidence="1">Secreted</location>
    </subcellularLocation>
    <subcellularLocation>
        <location evidence="2">Secreted</location>
        <location evidence="2">Extracellular space</location>
    </subcellularLocation>
    <text evidence="2">The majority of the secreted protein is associated with the extracellular matrix.</text>
</comment>
<comment type="tissue specificity">
    <text evidence="5">Detected in heart and bone.</text>
</comment>
<comment type="domain">
    <text evidence="1">The N-terminal domain mediates glycosyltransferase activity.</text>
</comment>
<comment type="domain">
    <text evidence="1">The C-terminal domain that mediates lysyl hydroxylase activity is also important for homodimerization.</text>
</comment>
<evidence type="ECO:0000250" key="1">
    <source>
        <dbReference type="UniProtKB" id="O60568"/>
    </source>
</evidence>
<evidence type="ECO:0000250" key="2">
    <source>
        <dbReference type="UniProtKB" id="Q9R0E1"/>
    </source>
</evidence>
<evidence type="ECO:0000255" key="3"/>
<evidence type="ECO:0000255" key="4">
    <source>
        <dbReference type="PROSITE-ProRule" id="PRU00805"/>
    </source>
</evidence>
<evidence type="ECO:0000269" key="5">
    <source>
    </source>
</evidence>
<evidence type="ECO:0000305" key="6"/>